<dbReference type="EMBL" id="AE008923">
    <property type="protein sequence ID" value="AAM36870.1"/>
    <property type="molecule type" value="Genomic_DNA"/>
</dbReference>
<dbReference type="SMR" id="Q8PKZ8"/>
<dbReference type="KEGG" id="xac:XAC2008"/>
<dbReference type="eggNOG" id="COG2834">
    <property type="taxonomic scope" value="Bacteria"/>
</dbReference>
<dbReference type="HOGENOM" id="CLU_087560_0_0_6"/>
<dbReference type="Proteomes" id="UP000000576">
    <property type="component" value="Chromosome"/>
</dbReference>
<dbReference type="GO" id="GO:0030288">
    <property type="term" value="C:outer membrane-bounded periplasmic space"/>
    <property type="evidence" value="ECO:0007669"/>
    <property type="project" value="TreeGrafter"/>
</dbReference>
<dbReference type="GO" id="GO:0044874">
    <property type="term" value="P:lipoprotein localization to outer membrane"/>
    <property type="evidence" value="ECO:0007669"/>
    <property type="project" value="UniProtKB-UniRule"/>
</dbReference>
<dbReference type="GO" id="GO:0042953">
    <property type="term" value="P:lipoprotein transport"/>
    <property type="evidence" value="ECO:0007669"/>
    <property type="project" value="InterPro"/>
</dbReference>
<dbReference type="CDD" id="cd16325">
    <property type="entry name" value="LolA"/>
    <property type="match status" value="1"/>
</dbReference>
<dbReference type="FunFam" id="2.50.20.10:FF:000006">
    <property type="entry name" value="Outer-membrane lipoprotein carrier protein"/>
    <property type="match status" value="1"/>
</dbReference>
<dbReference type="Gene3D" id="2.50.20.10">
    <property type="entry name" value="Lipoprotein localisation LolA/LolB/LppX"/>
    <property type="match status" value="1"/>
</dbReference>
<dbReference type="HAMAP" id="MF_00240">
    <property type="entry name" value="LolA"/>
    <property type="match status" value="1"/>
</dbReference>
<dbReference type="InterPro" id="IPR029046">
    <property type="entry name" value="LolA/LolB/LppX"/>
</dbReference>
<dbReference type="InterPro" id="IPR004564">
    <property type="entry name" value="OM_lipoprot_carrier_LolA-like"/>
</dbReference>
<dbReference type="InterPro" id="IPR018323">
    <property type="entry name" value="OM_lipoprot_carrier_LolA_Pbac"/>
</dbReference>
<dbReference type="NCBIfam" id="TIGR00547">
    <property type="entry name" value="lolA"/>
    <property type="match status" value="1"/>
</dbReference>
<dbReference type="PANTHER" id="PTHR35869">
    <property type="entry name" value="OUTER-MEMBRANE LIPOPROTEIN CARRIER PROTEIN"/>
    <property type="match status" value="1"/>
</dbReference>
<dbReference type="PANTHER" id="PTHR35869:SF1">
    <property type="entry name" value="OUTER-MEMBRANE LIPOPROTEIN CARRIER PROTEIN"/>
    <property type="match status" value="1"/>
</dbReference>
<dbReference type="Pfam" id="PF03548">
    <property type="entry name" value="LolA"/>
    <property type="match status" value="1"/>
</dbReference>
<dbReference type="SUPFAM" id="SSF89392">
    <property type="entry name" value="Prokaryotic lipoproteins and lipoprotein localization factors"/>
    <property type="match status" value="1"/>
</dbReference>
<evidence type="ECO:0000255" key="1">
    <source>
        <dbReference type="HAMAP-Rule" id="MF_00240"/>
    </source>
</evidence>
<proteinExistence type="inferred from homology"/>
<sequence length="209" mass="22956">MHRQLRYAVLATALFASTAFAGARQELDTFTRGLKGLDGQFSQRVTDANGRVKETSSGRVALATPRQFRWEYAKPYKQLIVADGKKVWVFDPDLEQVTVRAQGSEEQNSPLVALIDPALLDKKYDVSEEAAPRDGLQWLSLTPKVDTDASFQIASLGFGREGLARMEVVDAVGQRTAIGFSGWKRNPAFAADTFRYTPAKGVDVVGDAQ</sequence>
<name>LOLA_XANAC</name>
<comment type="function">
    <text evidence="1">Participates in the translocation of lipoproteins from the inner membrane to the outer membrane. Only forms a complex with a lipoprotein if the residue after the N-terminal Cys is not an aspartate (The Asp acts as a targeting signal to indicate that the lipoprotein should stay in the inner membrane).</text>
</comment>
<comment type="subunit">
    <text evidence="1">Monomer.</text>
</comment>
<comment type="subcellular location">
    <subcellularLocation>
        <location evidence="1">Periplasm</location>
    </subcellularLocation>
</comment>
<comment type="similarity">
    <text evidence="1">Belongs to the LolA family.</text>
</comment>
<accession>Q8PKZ8</accession>
<gene>
    <name evidence="1" type="primary">lolA</name>
    <name type="ordered locus">XAC2008</name>
</gene>
<protein>
    <recommendedName>
        <fullName evidence="1">Outer-membrane lipoprotein carrier protein</fullName>
    </recommendedName>
</protein>
<keyword id="KW-0143">Chaperone</keyword>
<keyword id="KW-0574">Periplasm</keyword>
<keyword id="KW-0653">Protein transport</keyword>
<keyword id="KW-0732">Signal</keyword>
<keyword id="KW-0813">Transport</keyword>
<feature type="signal peptide" evidence="1">
    <location>
        <begin position="1"/>
        <end position="21"/>
    </location>
</feature>
<feature type="chain" id="PRO_0000018285" description="Outer-membrane lipoprotein carrier protein">
    <location>
        <begin position="22"/>
        <end position="209"/>
    </location>
</feature>
<reference key="1">
    <citation type="journal article" date="2002" name="Nature">
        <title>Comparison of the genomes of two Xanthomonas pathogens with differing host specificities.</title>
        <authorList>
            <person name="da Silva A.C.R."/>
            <person name="Ferro J.A."/>
            <person name="Reinach F.C."/>
            <person name="Farah C.S."/>
            <person name="Furlan L.R."/>
            <person name="Quaggio R.B."/>
            <person name="Monteiro-Vitorello C.B."/>
            <person name="Van Sluys M.A."/>
            <person name="Almeida N.F. Jr."/>
            <person name="Alves L.M.C."/>
            <person name="do Amaral A.M."/>
            <person name="Bertolini M.C."/>
            <person name="Camargo L.E.A."/>
            <person name="Camarotte G."/>
            <person name="Cannavan F."/>
            <person name="Cardozo J."/>
            <person name="Chambergo F."/>
            <person name="Ciapina L.P."/>
            <person name="Cicarelli R.M.B."/>
            <person name="Coutinho L.L."/>
            <person name="Cursino-Santos J.R."/>
            <person name="El-Dorry H."/>
            <person name="Faria J.B."/>
            <person name="Ferreira A.J.S."/>
            <person name="Ferreira R.C.C."/>
            <person name="Ferro M.I.T."/>
            <person name="Formighieri E.F."/>
            <person name="Franco M.C."/>
            <person name="Greggio C.C."/>
            <person name="Gruber A."/>
            <person name="Katsuyama A.M."/>
            <person name="Kishi L.T."/>
            <person name="Leite R.P."/>
            <person name="Lemos E.G.M."/>
            <person name="Lemos M.V.F."/>
            <person name="Locali E.C."/>
            <person name="Machado M.A."/>
            <person name="Madeira A.M.B.N."/>
            <person name="Martinez-Rossi N.M."/>
            <person name="Martins E.C."/>
            <person name="Meidanis J."/>
            <person name="Menck C.F.M."/>
            <person name="Miyaki C.Y."/>
            <person name="Moon D.H."/>
            <person name="Moreira L.M."/>
            <person name="Novo M.T.M."/>
            <person name="Okura V.K."/>
            <person name="Oliveira M.C."/>
            <person name="Oliveira V.R."/>
            <person name="Pereira H.A."/>
            <person name="Rossi A."/>
            <person name="Sena J.A.D."/>
            <person name="Silva C."/>
            <person name="de Souza R.F."/>
            <person name="Spinola L.A.F."/>
            <person name="Takita M.A."/>
            <person name="Tamura R.E."/>
            <person name="Teixeira E.C."/>
            <person name="Tezza R.I.D."/>
            <person name="Trindade dos Santos M."/>
            <person name="Truffi D."/>
            <person name="Tsai S.M."/>
            <person name="White F.F."/>
            <person name="Setubal J.C."/>
            <person name="Kitajima J.P."/>
        </authorList>
    </citation>
    <scope>NUCLEOTIDE SEQUENCE [LARGE SCALE GENOMIC DNA]</scope>
    <source>
        <strain>306</strain>
    </source>
</reference>
<organism>
    <name type="scientific">Xanthomonas axonopodis pv. citri (strain 306)</name>
    <dbReference type="NCBI Taxonomy" id="190486"/>
    <lineage>
        <taxon>Bacteria</taxon>
        <taxon>Pseudomonadati</taxon>
        <taxon>Pseudomonadota</taxon>
        <taxon>Gammaproteobacteria</taxon>
        <taxon>Lysobacterales</taxon>
        <taxon>Lysobacteraceae</taxon>
        <taxon>Xanthomonas</taxon>
    </lineage>
</organism>